<evidence type="ECO:0000250" key="1"/>
<evidence type="ECO:0000255" key="2"/>
<evidence type="ECO:0000256" key="3">
    <source>
        <dbReference type="SAM" id="MobiDB-lite"/>
    </source>
</evidence>
<evidence type="ECO:0000305" key="4"/>
<reference key="1">
    <citation type="journal article" date="2002" name="Nature">
        <title>Sequence and analysis of rice chromosome 4.</title>
        <authorList>
            <person name="Feng Q."/>
            <person name="Zhang Y."/>
            <person name="Hao P."/>
            <person name="Wang S."/>
            <person name="Fu G."/>
            <person name="Huang Y."/>
            <person name="Li Y."/>
            <person name="Zhu J."/>
            <person name="Liu Y."/>
            <person name="Hu X."/>
            <person name="Jia P."/>
            <person name="Zhang Y."/>
            <person name="Zhao Q."/>
            <person name="Ying K."/>
            <person name="Yu S."/>
            <person name="Tang Y."/>
            <person name="Weng Q."/>
            <person name="Zhang L."/>
            <person name="Lu Y."/>
            <person name="Mu J."/>
            <person name="Lu Y."/>
            <person name="Zhang L.S."/>
            <person name="Yu Z."/>
            <person name="Fan D."/>
            <person name="Liu X."/>
            <person name="Lu T."/>
            <person name="Li C."/>
            <person name="Wu Y."/>
            <person name="Sun T."/>
            <person name="Lei H."/>
            <person name="Li T."/>
            <person name="Hu H."/>
            <person name="Guan J."/>
            <person name="Wu M."/>
            <person name="Zhang R."/>
            <person name="Zhou B."/>
            <person name="Chen Z."/>
            <person name="Chen L."/>
            <person name="Jin Z."/>
            <person name="Wang R."/>
            <person name="Yin H."/>
            <person name="Cai Z."/>
            <person name="Ren S."/>
            <person name="Lv G."/>
            <person name="Gu W."/>
            <person name="Zhu G."/>
            <person name="Tu Y."/>
            <person name="Jia J."/>
            <person name="Zhang Y."/>
            <person name="Chen J."/>
            <person name="Kang H."/>
            <person name="Chen X."/>
            <person name="Shao C."/>
            <person name="Sun Y."/>
            <person name="Hu Q."/>
            <person name="Zhang X."/>
            <person name="Zhang W."/>
            <person name="Wang L."/>
            <person name="Ding C."/>
            <person name="Sheng H."/>
            <person name="Gu J."/>
            <person name="Chen S."/>
            <person name="Ni L."/>
            <person name="Zhu F."/>
            <person name="Chen W."/>
            <person name="Lan L."/>
            <person name="Lai Y."/>
            <person name="Cheng Z."/>
            <person name="Gu M."/>
            <person name="Jiang J."/>
            <person name="Li J."/>
            <person name="Hong G."/>
            <person name="Xue Y."/>
            <person name="Han B."/>
        </authorList>
    </citation>
    <scope>NUCLEOTIDE SEQUENCE [LARGE SCALE GENOMIC DNA]</scope>
    <source>
        <strain>cv. Nipponbare</strain>
    </source>
</reference>
<reference key="2">
    <citation type="journal article" date="2005" name="Nature">
        <title>The map-based sequence of the rice genome.</title>
        <authorList>
            <consortium name="International rice genome sequencing project (IRGSP)"/>
        </authorList>
    </citation>
    <scope>NUCLEOTIDE SEQUENCE [LARGE SCALE GENOMIC DNA]</scope>
    <source>
        <strain>cv. Nipponbare</strain>
    </source>
</reference>
<reference key="3">
    <citation type="journal article" date="2008" name="Nucleic Acids Res.">
        <title>The rice annotation project database (RAP-DB): 2008 update.</title>
        <authorList>
            <consortium name="The rice annotation project (RAP)"/>
        </authorList>
    </citation>
    <scope>GENOME REANNOTATION</scope>
    <source>
        <strain>cv. Nipponbare</strain>
    </source>
</reference>
<reference key="4">
    <citation type="journal article" date="2013" name="Rice">
        <title>Improvement of the Oryza sativa Nipponbare reference genome using next generation sequence and optical map data.</title>
        <authorList>
            <person name="Kawahara Y."/>
            <person name="de la Bastide M."/>
            <person name="Hamilton J.P."/>
            <person name="Kanamori H."/>
            <person name="McCombie W.R."/>
            <person name="Ouyang S."/>
            <person name="Schwartz D.C."/>
            <person name="Tanaka T."/>
            <person name="Wu J."/>
            <person name="Zhou S."/>
            <person name="Childs K.L."/>
            <person name="Davidson R.M."/>
            <person name="Lin H."/>
            <person name="Quesada-Ocampo L."/>
            <person name="Vaillancourt B."/>
            <person name="Sakai H."/>
            <person name="Lee S.S."/>
            <person name="Kim J."/>
            <person name="Numa H."/>
            <person name="Itoh T."/>
            <person name="Buell C.R."/>
            <person name="Matsumoto T."/>
        </authorList>
    </citation>
    <scope>GENOME REANNOTATION</scope>
    <source>
        <strain>cv. Nipponbare</strain>
    </source>
</reference>
<reference key="5">
    <citation type="journal article" date="2003" name="Science">
        <title>Collection, mapping, and annotation of over 28,000 cDNA clones from japonica rice.</title>
        <authorList>
            <consortium name="The rice full-length cDNA consortium"/>
        </authorList>
    </citation>
    <scope>NUCLEOTIDE SEQUENCE [LARGE SCALE MRNA]</scope>
    <source>
        <strain>cv. Nipponbare</strain>
    </source>
</reference>
<keyword id="KW-0143">Chaperone</keyword>
<keyword id="KW-0175">Coiled coil</keyword>
<keyword id="KW-0963">Cytoplasm</keyword>
<keyword id="KW-0539">Nucleus</keyword>
<keyword id="KW-1185">Reference proteome</keyword>
<proteinExistence type="evidence at transcript level"/>
<name>NRP1_ORYSJ</name>
<gene>
    <name type="ordered locus">Os04g0459700</name>
    <name type="ordered locus">LOC_Os04g38620</name>
    <name type="ORF">OSJNBa0036B21.26</name>
    <name type="ORF">OSJNBa0072F16.3</name>
</gene>
<sequence length="259" mass="29998">MAAAEQKGKKPRTDGAEAEPVDAALLQSIEKLQEIQDEIEKVNEEACDKVLELEQKYNEVRRPVYVRRNKIIKQIPDFWLTAFLSHPMLGELLTEDDQKIFKHLESIDVDDSEDIKSGYSITLTFSPNPYFEDTKLTKTYSFSDDEAVKVKATSIRWKKGMDIANDRAYTKKGDKRILIDESFFTWFNSEKNRSFAHGAMDEVADVIKEDLWPNPLKYFNNEFEEELELLDDDDEVSDDDDEEEDDEDQGEGEEDGEEN</sequence>
<organism>
    <name type="scientific">Oryza sativa subsp. japonica</name>
    <name type="common">Rice</name>
    <dbReference type="NCBI Taxonomy" id="39947"/>
    <lineage>
        <taxon>Eukaryota</taxon>
        <taxon>Viridiplantae</taxon>
        <taxon>Streptophyta</taxon>
        <taxon>Embryophyta</taxon>
        <taxon>Tracheophyta</taxon>
        <taxon>Spermatophyta</taxon>
        <taxon>Magnoliopsida</taxon>
        <taxon>Liliopsida</taxon>
        <taxon>Poales</taxon>
        <taxon>Poaceae</taxon>
        <taxon>BOP clade</taxon>
        <taxon>Oryzoideae</taxon>
        <taxon>Oryzeae</taxon>
        <taxon>Oryzinae</taxon>
        <taxon>Oryza</taxon>
        <taxon>Oryza sativa</taxon>
    </lineage>
</organism>
<protein>
    <recommendedName>
        <fullName>NAP1-related protein 1</fullName>
    </recommendedName>
    <alternativeName>
        <fullName>Protein SET homolog 1</fullName>
    </alternativeName>
</protein>
<feature type="chain" id="PRO_0000423705" description="NAP1-related protein 1">
    <location>
        <begin position="1"/>
        <end position="259"/>
    </location>
</feature>
<feature type="region of interest" description="Disordered" evidence="3">
    <location>
        <begin position="1"/>
        <end position="20"/>
    </location>
</feature>
<feature type="region of interest" description="Disordered" evidence="3">
    <location>
        <begin position="228"/>
        <end position="259"/>
    </location>
</feature>
<feature type="coiled-coil region" evidence="2">
    <location>
        <begin position="21"/>
        <end position="62"/>
    </location>
</feature>
<feature type="compositionally biased region" description="Basic and acidic residues" evidence="3">
    <location>
        <begin position="1"/>
        <end position="15"/>
    </location>
</feature>
<feature type="sequence conflict" description="In Ref. 5; AK102874." evidence="4" ref="5">
    <original>P</original>
    <variation>L</variation>
    <location>
        <position position="215"/>
    </location>
</feature>
<dbReference type="EMBL" id="AL606460">
    <property type="protein sequence ID" value="CAD40978.1"/>
    <property type="molecule type" value="Genomic_DNA"/>
</dbReference>
<dbReference type="EMBL" id="AL606636">
    <property type="protein sequence ID" value="CAD40908.1"/>
    <property type="molecule type" value="Genomic_DNA"/>
</dbReference>
<dbReference type="EMBL" id="AP008210">
    <property type="protein sequence ID" value="BAF14900.1"/>
    <property type="molecule type" value="Genomic_DNA"/>
</dbReference>
<dbReference type="EMBL" id="AP014960">
    <property type="protein sequence ID" value="BAS89535.1"/>
    <property type="molecule type" value="Genomic_DNA"/>
</dbReference>
<dbReference type="EMBL" id="AK102874">
    <property type="status" value="NOT_ANNOTATED_CDS"/>
    <property type="molecule type" value="mRNA"/>
</dbReference>
<dbReference type="RefSeq" id="XP_015633828.1">
    <property type="nucleotide sequence ID" value="XM_015778342.1"/>
</dbReference>
<dbReference type="SMR" id="Q7X7C9"/>
<dbReference type="FunCoup" id="Q7X7C9">
    <property type="interactions" value="2438"/>
</dbReference>
<dbReference type="STRING" id="39947.Q7X7C9"/>
<dbReference type="PaxDb" id="39947-Q7X7C9"/>
<dbReference type="EnsemblPlants" id="Os04t0459700-02">
    <property type="protein sequence ID" value="Os04t0459700-02"/>
    <property type="gene ID" value="Os04g0459700"/>
</dbReference>
<dbReference type="Gramene" id="Os04t0459700-02">
    <property type="protein sequence ID" value="Os04t0459700-02"/>
    <property type="gene ID" value="Os04g0459700"/>
</dbReference>
<dbReference type="KEGG" id="dosa:Os04g0459700"/>
<dbReference type="eggNOG" id="KOG1508">
    <property type="taxonomic scope" value="Eukaryota"/>
</dbReference>
<dbReference type="InParanoid" id="Q7X7C9"/>
<dbReference type="OMA" id="RFTFEFK"/>
<dbReference type="OrthoDB" id="19419at2759"/>
<dbReference type="Proteomes" id="UP000000763">
    <property type="component" value="Chromosome 4"/>
</dbReference>
<dbReference type="Proteomes" id="UP000059680">
    <property type="component" value="Chromosome 4"/>
</dbReference>
<dbReference type="ExpressionAtlas" id="Q7X7C9">
    <property type="expression patterns" value="baseline and differential"/>
</dbReference>
<dbReference type="GO" id="GO:0000785">
    <property type="term" value="C:chromatin"/>
    <property type="evidence" value="ECO:0000318"/>
    <property type="project" value="GO_Central"/>
</dbReference>
<dbReference type="GO" id="GO:0005737">
    <property type="term" value="C:cytoplasm"/>
    <property type="evidence" value="ECO:0007669"/>
    <property type="project" value="UniProtKB-SubCell"/>
</dbReference>
<dbReference type="GO" id="GO:0005634">
    <property type="term" value="C:nucleus"/>
    <property type="evidence" value="ECO:0000318"/>
    <property type="project" value="GO_Central"/>
</dbReference>
<dbReference type="GO" id="GO:0003682">
    <property type="term" value="F:chromatin binding"/>
    <property type="evidence" value="ECO:0000318"/>
    <property type="project" value="GO_Central"/>
</dbReference>
<dbReference type="GO" id="GO:0042393">
    <property type="term" value="F:histone binding"/>
    <property type="evidence" value="ECO:0000318"/>
    <property type="project" value="GO_Central"/>
</dbReference>
<dbReference type="GO" id="GO:0000724">
    <property type="term" value="P:double-strand break repair via homologous recombination"/>
    <property type="evidence" value="ECO:0007669"/>
    <property type="project" value="UniProtKB-ARBA"/>
</dbReference>
<dbReference type="GO" id="GO:0006334">
    <property type="term" value="P:nucleosome assembly"/>
    <property type="evidence" value="ECO:0007669"/>
    <property type="project" value="InterPro"/>
</dbReference>
<dbReference type="Gene3D" id="1.20.5.1500">
    <property type="match status" value="1"/>
</dbReference>
<dbReference type="Gene3D" id="3.30.1120.90">
    <property type="entry name" value="Nucleosome assembly protein"/>
    <property type="match status" value="1"/>
</dbReference>
<dbReference type="InterPro" id="IPR037231">
    <property type="entry name" value="NAP-like_sf"/>
</dbReference>
<dbReference type="InterPro" id="IPR002164">
    <property type="entry name" value="NAP_family"/>
</dbReference>
<dbReference type="PANTHER" id="PTHR11875">
    <property type="entry name" value="TESTIS-SPECIFIC Y-ENCODED PROTEIN"/>
    <property type="match status" value="1"/>
</dbReference>
<dbReference type="Pfam" id="PF00956">
    <property type="entry name" value="NAP"/>
    <property type="match status" value="1"/>
</dbReference>
<dbReference type="SUPFAM" id="SSF143113">
    <property type="entry name" value="NAP-like"/>
    <property type="match status" value="1"/>
</dbReference>
<accession>Q7X7C9</accession>
<accession>A0A0P0WB53</accession>
<comment type="function">
    <text evidence="1">Acts as a histone H2A/H2B chaperone in nucleosome assembly.</text>
</comment>
<comment type="subcellular location">
    <subcellularLocation>
        <location evidence="1">Nucleus</location>
    </subcellularLocation>
    <subcellularLocation>
        <location evidence="1">Cytoplasm</location>
    </subcellularLocation>
</comment>
<comment type="domain">
    <text>The acidic domain is probably involved in the interaction with histones.</text>
</comment>
<comment type="similarity">
    <text evidence="4">Belongs to the nucleosome assembly protein (NAP) family.</text>
</comment>
<comment type="sequence caution" evidence="4">
    <conflict type="frameshift">
        <sequence resource="EMBL" id="AK102874"/>
    </conflict>
</comment>